<protein>
    <recommendedName>
        <fullName evidence="2">Mitochondrial import receptor subunit TOM20 homolog</fullName>
    </recommendedName>
    <alternativeName>
        <fullName evidence="2">Translocase of outer mitochondrial membrane protein 20</fullName>
    </alternativeName>
</protein>
<comment type="function">
    <text evidence="1">Central component of the receptor complex responsible for the recognition and translocation of cytosolically synthesized mitochondrial preproteins. Together with TOM22 functions as the transit peptide receptor at the surface of the mitochondrion outer membrane and facilitates the movement of preproteins into the translocation pore (By similarity).</text>
</comment>
<comment type="subunit">
    <text evidence="1">Forms part of the preprotein translocase complex of the outer mitochondrial membrane (TOM complex).</text>
</comment>
<comment type="subcellular location">
    <subcellularLocation>
        <location evidence="5">Mitochondrion outer membrane</location>
        <topology evidence="3">Single-pass membrane protein</topology>
    </subcellularLocation>
</comment>
<comment type="similarity">
    <text evidence="3">Belongs to the Tom20 family.</text>
</comment>
<evidence type="ECO:0000250" key="1">
    <source>
        <dbReference type="UniProtKB" id="P35848"/>
    </source>
</evidence>
<evidence type="ECO:0000250" key="2">
    <source>
        <dbReference type="UniProtKB" id="Q19766"/>
    </source>
</evidence>
<evidence type="ECO:0000255" key="3"/>
<evidence type="ECO:0000256" key="4">
    <source>
        <dbReference type="SAM" id="MobiDB-lite"/>
    </source>
</evidence>
<evidence type="ECO:0000305" key="5"/>
<evidence type="ECO:0000312" key="6">
    <source>
        <dbReference type="EMBL" id="CAP39574.1"/>
    </source>
</evidence>
<reference evidence="6" key="1">
    <citation type="journal article" date="2003" name="PLoS Biol.">
        <title>The genome sequence of Caenorhabditis briggsae: a platform for comparative genomics.</title>
        <authorList>
            <person name="Stein L.D."/>
            <person name="Bao Z."/>
            <person name="Blasiar D."/>
            <person name="Blumenthal T."/>
            <person name="Brent M.R."/>
            <person name="Chen N."/>
            <person name="Chinwalla A."/>
            <person name="Clarke L."/>
            <person name="Clee C."/>
            <person name="Coghlan A."/>
            <person name="Coulson A."/>
            <person name="D'Eustachio P."/>
            <person name="Fitch D.H.A."/>
            <person name="Fulton L.A."/>
            <person name="Fulton R.E."/>
            <person name="Griffiths-Jones S."/>
            <person name="Harris T.W."/>
            <person name="Hillier L.W."/>
            <person name="Kamath R."/>
            <person name="Kuwabara P.E."/>
            <person name="Mardis E.R."/>
            <person name="Marra M.A."/>
            <person name="Miner T.L."/>
            <person name="Minx P."/>
            <person name="Mullikin J.C."/>
            <person name="Plumb R.W."/>
            <person name="Rogers J."/>
            <person name="Schein J.E."/>
            <person name="Sohrmann M."/>
            <person name="Spieth J."/>
            <person name="Stajich J.E."/>
            <person name="Wei C."/>
            <person name="Willey D."/>
            <person name="Wilson R.K."/>
            <person name="Durbin R.M."/>
            <person name="Waterston R.H."/>
        </authorList>
    </citation>
    <scope>NUCLEOTIDE SEQUENCE [LARGE SCALE GENOMIC DNA]</scope>
    <source>
        <strain>AF16</strain>
    </source>
</reference>
<name>TOM20_CAEBR</name>
<proteinExistence type="inferred from homology"/>
<organism>
    <name type="scientific">Caenorhabditis briggsae</name>
    <dbReference type="NCBI Taxonomy" id="6238"/>
    <lineage>
        <taxon>Eukaryota</taxon>
        <taxon>Metazoa</taxon>
        <taxon>Ecdysozoa</taxon>
        <taxon>Nematoda</taxon>
        <taxon>Chromadorea</taxon>
        <taxon>Rhabditida</taxon>
        <taxon>Rhabditina</taxon>
        <taxon>Rhabditomorpha</taxon>
        <taxon>Rhabditoidea</taxon>
        <taxon>Rhabditidae</taxon>
        <taxon>Peloderinae</taxon>
        <taxon>Caenorhabditis</taxon>
    </lineage>
</organism>
<gene>
    <name type="primary">tomm-20</name>
    <name type="ORF">CBG23457</name>
</gene>
<dbReference type="EMBL" id="HE601533">
    <property type="protein sequence ID" value="CAP39574.1"/>
    <property type="molecule type" value="Genomic_DNA"/>
</dbReference>
<dbReference type="SMR" id="A8Y3V5"/>
<dbReference type="FunCoup" id="A8Y3V5">
    <property type="interactions" value="2630"/>
</dbReference>
<dbReference type="STRING" id="6238.A8Y3V5"/>
<dbReference type="EnsemblMetazoa" id="CBG23457.1">
    <property type="protein sequence ID" value="CBG23457.1"/>
    <property type="gene ID" value="WBGene00041813"/>
</dbReference>
<dbReference type="KEGG" id="cbr:CBG_23457"/>
<dbReference type="CTD" id="8578730"/>
<dbReference type="WormBase" id="CBG23457">
    <property type="protein sequence ID" value="CBP05557"/>
    <property type="gene ID" value="WBGene00041813"/>
    <property type="gene designation" value="Cbr-tomm-20"/>
</dbReference>
<dbReference type="eggNOG" id="KOG4056">
    <property type="taxonomic scope" value="Eukaryota"/>
</dbReference>
<dbReference type="HOGENOM" id="CLU_100000_1_1_1"/>
<dbReference type="InParanoid" id="A8Y3V5"/>
<dbReference type="OMA" id="HKRINAP"/>
<dbReference type="OrthoDB" id="2154253at2759"/>
<dbReference type="Proteomes" id="UP000008549">
    <property type="component" value="Unassembled WGS sequence"/>
</dbReference>
<dbReference type="GO" id="GO:0005742">
    <property type="term" value="C:mitochondrial outer membrane translocase complex"/>
    <property type="evidence" value="ECO:0000318"/>
    <property type="project" value="GO_Central"/>
</dbReference>
<dbReference type="GO" id="GO:0030943">
    <property type="term" value="F:mitochondrion targeting sequence binding"/>
    <property type="evidence" value="ECO:0000318"/>
    <property type="project" value="GO_Central"/>
</dbReference>
<dbReference type="GO" id="GO:0006886">
    <property type="term" value="P:intracellular protein transport"/>
    <property type="evidence" value="ECO:0007669"/>
    <property type="project" value="InterPro"/>
</dbReference>
<dbReference type="GO" id="GO:0030150">
    <property type="term" value="P:protein import into mitochondrial matrix"/>
    <property type="evidence" value="ECO:0000318"/>
    <property type="project" value="GO_Central"/>
</dbReference>
<dbReference type="GO" id="GO:0016031">
    <property type="term" value="P:tRNA import into mitochondrion"/>
    <property type="evidence" value="ECO:0000318"/>
    <property type="project" value="GO_Central"/>
</dbReference>
<dbReference type="FunFam" id="1.20.960.10:FF:000004">
    <property type="entry name" value="Mitochondrial import receptor subunit TOM20 homolog"/>
    <property type="match status" value="1"/>
</dbReference>
<dbReference type="Gene3D" id="1.20.960.10">
    <property type="entry name" value="Mitochondrial outer membrane translocase complex, subunit Tom20 domain"/>
    <property type="match status" value="1"/>
</dbReference>
<dbReference type="InterPro" id="IPR002056">
    <property type="entry name" value="MAS20"/>
</dbReference>
<dbReference type="InterPro" id="IPR022422">
    <property type="entry name" value="MAS20_rcpt_metazoan"/>
</dbReference>
<dbReference type="InterPro" id="IPR023392">
    <property type="entry name" value="Tom20_dom_sf"/>
</dbReference>
<dbReference type="NCBIfam" id="TIGR00985">
    <property type="entry name" value="3a0801s04tom"/>
    <property type="match status" value="1"/>
</dbReference>
<dbReference type="PANTHER" id="PTHR12430">
    <property type="entry name" value="MITOCHONDRIAL IMPORT RECEPTOR SUBUNIT TOM20"/>
    <property type="match status" value="1"/>
</dbReference>
<dbReference type="PANTHER" id="PTHR12430:SF0">
    <property type="entry name" value="TRANSLOCASE OF OUTER MITOCHONDRIAL MEMBRANE 20"/>
    <property type="match status" value="1"/>
</dbReference>
<dbReference type="Pfam" id="PF02064">
    <property type="entry name" value="MAS20"/>
    <property type="match status" value="1"/>
</dbReference>
<dbReference type="PRINTS" id="PR01989">
    <property type="entry name" value="EUOM20RECPTR"/>
</dbReference>
<dbReference type="PRINTS" id="PR00351">
    <property type="entry name" value="OM20RECEPTOR"/>
</dbReference>
<dbReference type="SUPFAM" id="SSF47157">
    <property type="entry name" value="Mitochondrial import receptor subunit Tom20"/>
    <property type="match status" value="1"/>
</dbReference>
<sequence>MTDTLFGFNKSNVVLAAGVAGAAFLGYCIYFDHKRINAPDYKDKIRQKRRAQAGSGGMAARRPPAGGNEMAPDVTDPSQMQRFFLQEVQLGEELMAAGNVEEGAVHIANAVMLCGESQQLLSIFQQTLSEEQFRAVVQQLPSTRERLADMFGARADEAENEPPLVQYLGDGPPPAQIQELIDDTDDLE</sequence>
<feature type="chain" id="PRO_0000413850" description="Mitochondrial import receptor subunit TOM20 homolog">
    <location>
        <begin position="1"/>
        <end position="188"/>
    </location>
</feature>
<feature type="topological domain" description="Mitochondrial intermembrane" evidence="3">
    <location>
        <begin position="1"/>
        <end position="12"/>
    </location>
</feature>
<feature type="transmembrane region" description="Helical" evidence="3">
    <location>
        <begin position="13"/>
        <end position="31"/>
    </location>
</feature>
<feature type="topological domain" description="Cytoplasmic" evidence="3">
    <location>
        <begin position="32"/>
        <end position="188"/>
    </location>
</feature>
<feature type="region of interest" description="Disordered" evidence="4">
    <location>
        <begin position="48"/>
        <end position="67"/>
    </location>
</feature>
<feature type="region of interest" description="Disordered" evidence="4">
    <location>
        <begin position="155"/>
        <end position="188"/>
    </location>
</feature>
<feature type="compositionally biased region" description="Low complexity" evidence="4">
    <location>
        <begin position="58"/>
        <end position="67"/>
    </location>
</feature>
<accession>A8Y3V5</accession>
<keyword id="KW-0472">Membrane</keyword>
<keyword id="KW-0496">Mitochondrion</keyword>
<keyword id="KW-1000">Mitochondrion outer membrane</keyword>
<keyword id="KW-0653">Protein transport</keyword>
<keyword id="KW-1185">Reference proteome</keyword>
<keyword id="KW-0812">Transmembrane</keyword>
<keyword id="KW-1133">Transmembrane helix</keyword>
<keyword id="KW-0813">Transport</keyword>